<sequence length="689" mass="76431">MADPASYKPARQDIPTNPGVYRFRDEHGRVIYVGKAKNLRNRVSSYFAPLHQLAPKTRAMVTTAAAVQWTVVGSEFESLQLEYTWIKEFAPRFNIAYRDDKSYPYLAVTMSEDVPRAMVTRGEKKPGNRYFGPYSQAWAIRDTLDALLRVFPVRTCTTGVYQRAERSGRPCLLGYIDKCSAPCVGNISQEEHRELADDLCRFMAGHAKPYIRELTRQMNEAAECMDFETAAARRDDVGALERVFERNTVVLTDSTDADFFAIAEDELEAAVQVFHVRGGRIRGQRGWITEKVEDVTTAQLMTNLLQQVYGEAQSGLAPAASGRRRTARHGSEDVVGQHRRTSELAYRQDTIPRAVHVSVLPDEADEIRAWLSELRGSQVTVQRPQRGDKAQLLETVAENARQALTLHKSRRAGDLTTRSASLQQLQEALGLPDALMRIECYDISHVQGTNVVASMVVFEDGLPRKSEYRKFSITGDAARDDTASMYDVIHRRFSRHVEQQRRAAEKGVSTGEVAADDDEGTTRAFAYPPNLVIVDGGPPQVAAAQRALDDLRVTDVHVVGLAKRLEEVWVPDDEFPVILPRASEGLFLMQRVRDEAHRFAITFHRQKRSKAMTVSALDEVPGLGPAKQKALLKHFGSVKKLRAATAEQILEVKGFGPALAVKVAQALGGEAAASSTAPAVDTGTGELLD</sequence>
<keyword id="KW-0963">Cytoplasm</keyword>
<keyword id="KW-0227">DNA damage</keyword>
<keyword id="KW-0228">DNA excision</keyword>
<keyword id="KW-0234">DNA repair</keyword>
<keyword id="KW-0267">Excision nuclease</keyword>
<keyword id="KW-1185">Reference proteome</keyword>
<keyword id="KW-0742">SOS response</keyword>
<name>UVRC_KOCRD</name>
<evidence type="ECO:0000255" key="1">
    <source>
        <dbReference type="HAMAP-Rule" id="MF_00203"/>
    </source>
</evidence>
<evidence type="ECO:0000256" key="2">
    <source>
        <dbReference type="SAM" id="MobiDB-lite"/>
    </source>
</evidence>
<proteinExistence type="inferred from homology"/>
<feature type="chain" id="PRO_1000099494" description="UvrABC system protein C">
    <location>
        <begin position="1"/>
        <end position="689"/>
    </location>
</feature>
<feature type="domain" description="GIY-YIG" evidence="1">
    <location>
        <begin position="16"/>
        <end position="95"/>
    </location>
</feature>
<feature type="domain" description="UVR" evidence="1">
    <location>
        <begin position="208"/>
        <end position="243"/>
    </location>
</feature>
<feature type="region of interest" description="Disordered" evidence="2">
    <location>
        <begin position="316"/>
        <end position="337"/>
    </location>
</feature>
<dbReference type="EMBL" id="AP009152">
    <property type="protein sequence ID" value="BAG29553.1"/>
    <property type="molecule type" value="Genomic_DNA"/>
</dbReference>
<dbReference type="RefSeq" id="WP_012398274.1">
    <property type="nucleotide sequence ID" value="NC_010617.1"/>
</dbReference>
<dbReference type="SMR" id="B2GH80"/>
<dbReference type="STRING" id="378753.KRH_12060"/>
<dbReference type="KEGG" id="krh:KRH_12060"/>
<dbReference type="eggNOG" id="COG0322">
    <property type="taxonomic scope" value="Bacteria"/>
</dbReference>
<dbReference type="HOGENOM" id="CLU_014841_3_2_11"/>
<dbReference type="OrthoDB" id="9804933at2"/>
<dbReference type="Proteomes" id="UP000008838">
    <property type="component" value="Chromosome"/>
</dbReference>
<dbReference type="GO" id="GO:0005737">
    <property type="term" value="C:cytoplasm"/>
    <property type="evidence" value="ECO:0007669"/>
    <property type="project" value="UniProtKB-SubCell"/>
</dbReference>
<dbReference type="GO" id="GO:0009380">
    <property type="term" value="C:excinuclease repair complex"/>
    <property type="evidence" value="ECO:0007669"/>
    <property type="project" value="InterPro"/>
</dbReference>
<dbReference type="GO" id="GO:0003677">
    <property type="term" value="F:DNA binding"/>
    <property type="evidence" value="ECO:0007669"/>
    <property type="project" value="UniProtKB-UniRule"/>
</dbReference>
<dbReference type="GO" id="GO:0009381">
    <property type="term" value="F:excinuclease ABC activity"/>
    <property type="evidence" value="ECO:0007669"/>
    <property type="project" value="UniProtKB-UniRule"/>
</dbReference>
<dbReference type="GO" id="GO:0006289">
    <property type="term" value="P:nucleotide-excision repair"/>
    <property type="evidence" value="ECO:0007669"/>
    <property type="project" value="UniProtKB-UniRule"/>
</dbReference>
<dbReference type="GO" id="GO:0009432">
    <property type="term" value="P:SOS response"/>
    <property type="evidence" value="ECO:0007669"/>
    <property type="project" value="UniProtKB-UniRule"/>
</dbReference>
<dbReference type="CDD" id="cd10434">
    <property type="entry name" value="GIY-YIG_UvrC_Cho"/>
    <property type="match status" value="1"/>
</dbReference>
<dbReference type="FunFam" id="3.30.420.340:FF:000003">
    <property type="entry name" value="UvrABC system protein C"/>
    <property type="match status" value="1"/>
</dbReference>
<dbReference type="FunFam" id="3.40.1440.10:FF:000001">
    <property type="entry name" value="UvrABC system protein C"/>
    <property type="match status" value="1"/>
</dbReference>
<dbReference type="Gene3D" id="1.10.150.20">
    <property type="entry name" value="5' to 3' exonuclease, C-terminal subdomain"/>
    <property type="match status" value="1"/>
</dbReference>
<dbReference type="Gene3D" id="3.40.1440.10">
    <property type="entry name" value="GIY-YIG endonuclease"/>
    <property type="match status" value="1"/>
</dbReference>
<dbReference type="Gene3D" id="4.10.860.10">
    <property type="entry name" value="UVR domain"/>
    <property type="match status" value="1"/>
</dbReference>
<dbReference type="Gene3D" id="3.30.420.340">
    <property type="entry name" value="UvrC, RNAse H endonuclease domain"/>
    <property type="match status" value="1"/>
</dbReference>
<dbReference type="HAMAP" id="MF_00203">
    <property type="entry name" value="UvrC"/>
    <property type="match status" value="1"/>
</dbReference>
<dbReference type="InterPro" id="IPR000305">
    <property type="entry name" value="GIY-YIG_endonuc"/>
</dbReference>
<dbReference type="InterPro" id="IPR035901">
    <property type="entry name" value="GIY-YIG_endonuc_sf"/>
</dbReference>
<dbReference type="InterPro" id="IPR047296">
    <property type="entry name" value="GIY-YIG_UvrC_Cho"/>
</dbReference>
<dbReference type="InterPro" id="IPR003583">
    <property type="entry name" value="Hlx-hairpin-Hlx_DNA-bd_motif"/>
</dbReference>
<dbReference type="InterPro" id="IPR010994">
    <property type="entry name" value="RuvA_2-like"/>
</dbReference>
<dbReference type="InterPro" id="IPR001943">
    <property type="entry name" value="UVR_dom"/>
</dbReference>
<dbReference type="InterPro" id="IPR036876">
    <property type="entry name" value="UVR_dom_sf"/>
</dbReference>
<dbReference type="InterPro" id="IPR050066">
    <property type="entry name" value="UvrABC_protein_C"/>
</dbReference>
<dbReference type="InterPro" id="IPR004791">
    <property type="entry name" value="UvrC"/>
</dbReference>
<dbReference type="InterPro" id="IPR001162">
    <property type="entry name" value="UvrC_RNase_H_dom"/>
</dbReference>
<dbReference type="InterPro" id="IPR038476">
    <property type="entry name" value="UvrC_RNase_H_dom_sf"/>
</dbReference>
<dbReference type="NCBIfam" id="NF001824">
    <property type="entry name" value="PRK00558.1-5"/>
    <property type="match status" value="1"/>
</dbReference>
<dbReference type="PANTHER" id="PTHR30562:SF1">
    <property type="entry name" value="UVRABC SYSTEM PROTEIN C"/>
    <property type="match status" value="1"/>
</dbReference>
<dbReference type="PANTHER" id="PTHR30562">
    <property type="entry name" value="UVRC/OXIDOREDUCTASE"/>
    <property type="match status" value="1"/>
</dbReference>
<dbReference type="Pfam" id="PF01541">
    <property type="entry name" value="GIY-YIG"/>
    <property type="match status" value="1"/>
</dbReference>
<dbReference type="Pfam" id="PF14520">
    <property type="entry name" value="HHH_5"/>
    <property type="match status" value="1"/>
</dbReference>
<dbReference type="Pfam" id="PF02151">
    <property type="entry name" value="UVR"/>
    <property type="match status" value="1"/>
</dbReference>
<dbReference type="Pfam" id="PF22920">
    <property type="entry name" value="UvrC_RNaseH"/>
    <property type="match status" value="2"/>
</dbReference>
<dbReference type="Pfam" id="PF08459">
    <property type="entry name" value="UvrC_RNaseH_dom"/>
    <property type="match status" value="1"/>
</dbReference>
<dbReference type="SMART" id="SM00465">
    <property type="entry name" value="GIYc"/>
    <property type="match status" value="1"/>
</dbReference>
<dbReference type="SMART" id="SM00278">
    <property type="entry name" value="HhH1"/>
    <property type="match status" value="2"/>
</dbReference>
<dbReference type="SUPFAM" id="SSF46600">
    <property type="entry name" value="C-terminal UvrC-binding domain of UvrB"/>
    <property type="match status" value="1"/>
</dbReference>
<dbReference type="SUPFAM" id="SSF82771">
    <property type="entry name" value="GIY-YIG endonuclease"/>
    <property type="match status" value="1"/>
</dbReference>
<dbReference type="SUPFAM" id="SSF47781">
    <property type="entry name" value="RuvA domain 2-like"/>
    <property type="match status" value="1"/>
</dbReference>
<dbReference type="PROSITE" id="PS50164">
    <property type="entry name" value="GIY_YIG"/>
    <property type="match status" value="1"/>
</dbReference>
<dbReference type="PROSITE" id="PS50151">
    <property type="entry name" value="UVR"/>
    <property type="match status" value="1"/>
</dbReference>
<dbReference type="PROSITE" id="PS50165">
    <property type="entry name" value="UVRC"/>
    <property type="match status" value="1"/>
</dbReference>
<comment type="function">
    <text evidence="1">The UvrABC repair system catalyzes the recognition and processing of DNA lesions. UvrC both incises the 5' and 3' sides of the lesion. The N-terminal half is responsible for the 3' incision and the C-terminal half is responsible for the 5' incision.</text>
</comment>
<comment type="subunit">
    <text evidence="1">Interacts with UvrB in an incision complex.</text>
</comment>
<comment type="subcellular location">
    <subcellularLocation>
        <location evidence="1">Cytoplasm</location>
    </subcellularLocation>
</comment>
<comment type="similarity">
    <text evidence="1">Belongs to the UvrC family.</text>
</comment>
<accession>B2GH80</accession>
<reference key="1">
    <citation type="journal article" date="2008" name="J. Bacteriol.">
        <title>Complete genome sequence of the soil actinomycete Kocuria rhizophila.</title>
        <authorList>
            <person name="Takarada H."/>
            <person name="Sekine M."/>
            <person name="Kosugi H."/>
            <person name="Matsuo Y."/>
            <person name="Fujisawa T."/>
            <person name="Omata S."/>
            <person name="Kishi E."/>
            <person name="Shimizu A."/>
            <person name="Tsukatani N."/>
            <person name="Tanikawa S."/>
            <person name="Fujita N."/>
            <person name="Harayama S."/>
        </authorList>
    </citation>
    <scope>NUCLEOTIDE SEQUENCE [LARGE SCALE GENOMIC DNA]</scope>
    <source>
        <strain>ATCC 9341 / DSM 348 / NBRC 103217 / DC2201</strain>
    </source>
</reference>
<protein>
    <recommendedName>
        <fullName evidence="1">UvrABC system protein C</fullName>
        <shortName evidence="1">Protein UvrC</shortName>
    </recommendedName>
    <alternativeName>
        <fullName evidence="1">Excinuclease ABC subunit C</fullName>
    </alternativeName>
</protein>
<organism>
    <name type="scientific">Kocuria rhizophila (strain ATCC 9341 / DSM 348 / NBRC 103217 / DC2201)</name>
    <dbReference type="NCBI Taxonomy" id="378753"/>
    <lineage>
        <taxon>Bacteria</taxon>
        <taxon>Bacillati</taxon>
        <taxon>Actinomycetota</taxon>
        <taxon>Actinomycetes</taxon>
        <taxon>Micrococcales</taxon>
        <taxon>Micrococcaceae</taxon>
        <taxon>Kocuria</taxon>
    </lineage>
</organism>
<gene>
    <name evidence="1" type="primary">uvrC</name>
    <name type="ordered locus">KRH_12060</name>
</gene>